<dbReference type="EMBL" id="U55001">
    <property type="protein sequence ID" value="AAB05445.1"/>
    <property type="molecule type" value="Genomic_DNA"/>
</dbReference>
<dbReference type="SMR" id="Q65956"/>
<dbReference type="GO" id="GO:0042025">
    <property type="term" value="C:host cell nucleus"/>
    <property type="evidence" value="ECO:0007669"/>
    <property type="project" value="UniProtKB-SubCell"/>
</dbReference>
<dbReference type="GO" id="GO:0019028">
    <property type="term" value="C:viral capsid"/>
    <property type="evidence" value="ECO:0007669"/>
    <property type="project" value="UniProtKB-UniRule"/>
</dbReference>
<dbReference type="GO" id="GO:0003677">
    <property type="term" value="F:DNA binding"/>
    <property type="evidence" value="ECO:0007669"/>
    <property type="project" value="UniProtKB-UniRule"/>
</dbReference>
<dbReference type="GO" id="GO:0008270">
    <property type="term" value="F:zinc ion binding"/>
    <property type="evidence" value="ECO:0007669"/>
    <property type="project" value="UniProtKB-UniRule"/>
</dbReference>
<dbReference type="GO" id="GO:0006260">
    <property type="term" value="P:DNA replication"/>
    <property type="evidence" value="ECO:0007669"/>
    <property type="project" value="UniProtKB-KW"/>
</dbReference>
<dbReference type="GO" id="GO:0006351">
    <property type="term" value="P:DNA-templated transcription"/>
    <property type="evidence" value="ECO:0007669"/>
    <property type="project" value="UniProtKB-UniRule"/>
</dbReference>
<dbReference type="GO" id="GO:0045740">
    <property type="term" value="P:positive regulation of DNA replication"/>
    <property type="evidence" value="ECO:0007669"/>
    <property type="project" value="UniProtKB-UniRule"/>
</dbReference>
<dbReference type="GO" id="GO:0039687">
    <property type="term" value="P:viral DNA strand displacement replication"/>
    <property type="evidence" value="ECO:0007669"/>
    <property type="project" value="UniProtKB-UniRule"/>
</dbReference>
<dbReference type="Gene3D" id="3.90.148.10">
    <property type="entry name" value="Adenovirus DNA-binding, C-terminal domain superfamily/Adenovirus DNA-binding, zinc binding domain"/>
    <property type="match status" value="1"/>
</dbReference>
<dbReference type="Gene3D" id="1.10.269.10">
    <property type="entry name" value="Adenovirus DNA-binding, N-terminal domain"/>
    <property type="match status" value="1"/>
</dbReference>
<dbReference type="HAMAP" id="MF_04054">
    <property type="entry name" value="ADV_DNB2"/>
    <property type="match status" value="1"/>
</dbReference>
<dbReference type="InterPro" id="IPR036367">
    <property type="entry name" value="Ad_DBP_C_sf"/>
</dbReference>
<dbReference type="InterPro" id="IPR036368">
    <property type="entry name" value="ADBP_zn-bd_sf"/>
</dbReference>
<dbReference type="InterPro" id="IPR003176">
    <property type="entry name" value="Adenovirus_DNA-bd_a"/>
</dbReference>
<dbReference type="InterPro" id="IPR036362">
    <property type="entry name" value="Adenovirus_DNA-bd_N_sf"/>
</dbReference>
<dbReference type="InterPro" id="IPR005376">
    <property type="entry name" value="Adenovirus_DNA-bd_zn-bd"/>
</dbReference>
<dbReference type="InterPro" id="IPR037540">
    <property type="entry name" value="ADV_DNB2"/>
</dbReference>
<dbReference type="Pfam" id="PF02236">
    <property type="entry name" value="Viral_DNA_bi"/>
    <property type="match status" value="1"/>
</dbReference>
<dbReference type="Pfam" id="PF03728">
    <property type="entry name" value="Viral_DNA_Zn_bi"/>
    <property type="match status" value="2"/>
</dbReference>
<dbReference type="SUPFAM" id="SSF47724">
    <property type="entry name" value="Domain of early E2A DNA-binding protein, ADDBP"/>
    <property type="match status" value="1"/>
</dbReference>
<dbReference type="SUPFAM" id="SSF57917">
    <property type="entry name" value="Zn-binding domains of ADDBP"/>
    <property type="match status" value="2"/>
</dbReference>
<feature type="chain" id="PRO_0000221684" description="DNA-binding protein">
    <location>
        <begin position="1"/>
        <end position="454"/>
    </location>
</feature>
<feature type="region of interest" description="Disordered" evidence="2">
    <location>
        <begin position="1"/>
        <end position="41"/>
    </location>
</feature>
<feature type="region of interest" description="Flexible loop" evidence="1">
    <location>
        <begin position="226"/>
        <end position="260"/>
    </location>
</feature>
<feature type="region of interest" description="C-terminal arm, DBP binding" evidence="1">
    <location>
        <begin position="440"/>
        <end position="454"/>
    </location>
</feature>
<feature type="binding site" evidence="1">
    <location>
        <position position="213"/>
    </location>
    <ligand>
        <name>Zn(2+)</name>
        <dbReference type="ChEBI" id="CHEBI:29105"/>
        <label>1</label>
    </ligand>
</feature>
<feature type="binding site" evidence="1">
    <location>
        <position position="215"/>
    </location>
    <ligand>
        <name>Zn(2+)</name>
        <dbReference type="ChEBI" id="CHEBI:29105"/>
        <label>1</label>
    </ligand>
</feature>
<feature type="binding site" evidence="1">
    <location>
        <position position="268"/>
    </location>
    <ligand>
        <name>Zn(2+)</name>
        <dbReference type="ChEBI" id="CHEBI:29105"/>
        <label>1</label>
    </ligand>
</feature>
<feature type="binding site" evidence="1">
    <location>
        <position position="284"/>
    </location>
    <ligand>
        <name>Zn(2+)</name>
        <dbReference type="ChEBI" id="CHEBI:29105"/>
        <label>1</label>
    </ligand>
</feature>
<feature type="binding site" evidence="1">
    <location>
        <position position="325"/>
    </location>
    <ligand>
        <name>Zn(2+)</name>
        <dbReference type="ChEBI" id="CHEBI:29105"/>
        <label>2</label>
    </ligand>
</feature>
<feature type="binding site" evidence="1">
    <location>
        <position position="327"/>
    </location>
    <ligand>
        <name>Zn(2+)</name>
        <dbReference type="ChEBI" id="CHEBI:29105"/>
        <label>2</label>
    </ligand>
</feature>
<feature type="binding site" evidence="1">
    <location>
        <position position="378"/>
    </location>
    <ligand>
        <name>Zn(2+)</name>
        <dbReference type="ChEBI" id="CHEBI:29105"/>
        <label>2</label>
    </ligand>
</feature>
<feature type="binding site" evidence="1">
    <location>
        <position position="394"/>
    </location>
    <ligand>
        <name>Zn(2+)</name>
        <dbReference type="ChEBI" id="CHEBI:29105"/>
        <label>2</label>
    </ligand>
</feature>
<feature type="modified residue" description="Phosphotyrosine; by host" evidence="1">
    <location>
        <position position="129"/>
    </location>
</feature>
<proteinExistence type="inferred from homology"/>
<gene>
    <name evidence="1" type="primary">DBP</name>
</gene>
<organism>
    <name type="scientific">Canine adenovirus serotype 1 (strain CLL)</name>
    <name type="common">CAdV-1</name>
    <name type="synonym">Canine adenovirus 1 (strain CLL)</name>
    <dbReference type="NCBI Taxonomy" id="69150"/>
    <lineage>
        <taxon>Viruses</taxon>
        <taxon>Varidnaviria</taxon>
        <taxon>Bamfordvirae</taxon>
        <taxon>Preplasmiviricota</taxon>
        <taxon>Tectiliviricetes</taxon>
        <taxon>Rowavirales</taxon>
        <taxon>Adenoviridae</taxon>
        <taxon>Mastadenovirus</taxon>
        <taxon>Canine mastadenovirus A</taxon>
    </lineage>
</organism>
<sequence length="454" mass="50295">MSHKKVVAISESSSDEEVPVAPPTAPPKKRQRKAVEEPRGHQAMVEIARQATAALKARGDPGSIIVQTFCDQTVDVDKEGNVIFTPAKQKSICNKSGSPLASVASKIFKASEHKWQSAMEFALKVLNAYQVDHSKLTLLPDEGTLECFKKAVQAYITTSKMHVTYTFTNQKTFLHVAGRLLLDFVIKAAELAPGVNPSGCVVWQHGCQSSLMCLHGSPMIQKEQLVEMDVNSENAQRALKENPEKTKIVSNRWGRNVVQFKNEDAFCCSMDVNMSGGNFSGASCGMFYTDGPKAIMAFQQIMAFLKACYPSMPNAESHLLMPLKCECNWNSSLPLLGRQTCKITPFSLASASHIDKSEVDDQKMLATLNNPAMLVFQCCNPVYRNSKAAPQKNCDFKISSVDLVSCLQIAKQIWLSTVGERPPVKFPEFHWSDEHRYQTTILPQGQHDDDLVLF</sequence>
<keyword id="KW-0235">DNA replication</keyword>
<keyword id="KW-0238">DNA-binding</keyword>
<keyword id="KW-0244">Early protein</keyword>
<keyword id="KW-1048">Host nucleus</keyword>
<keyword id="KW-0945">Host-virus interaction</keyword>
<keyword id="KW-0479">Metal-binding</keyword>
<keyword id="KW-0597">Phosphoprotein</keyword>
<keyword id="KW-1194">Viral DNA replication</keyword>
<keyword id="KW-0862">Zinc</keyword>
<reference key="1">
    <citation type="submission" date="1996-08" db="EMBL/GenBank/DDBJ databases">
        <title>DNA sequence and genomic organization of canine adenovirus type 1.</title>
        <authorList>
            <person name="Campbell J.B."/>
            <person name="Zhao Y."/>
        </authorList>
    </citation>
    <scope>NUCLEOTIDE SEQUENCE [LARGE SCALE GENOMIC DNA]</scope>
</reference>
<evidence type="ECO:0000255" key="1">
    <source>
        <dbReference type="HAMAP-Rule" id="MF_04054"/>
    </source>
</evidence>
<evidence type="ECO:0000256" key="2">
    <source>
        <dbReference type="SAM" id="MobiDB-lite"/>
    </source>
</evidence>
<evidence type="ECO:0000305" key="3"/>
<name>DNB2_ADECC</name>
<protein>
    <recommendedName>
        <fullName evidence="1">DNA-binding protein</fullName>
        <shortName evidence="1">DBP</shortName>
    </recommendedName>
    <alternativeName>
        <fullName evidence="1">Early 2A protein</fullName>
    </alternativeName>
    <alternativeName>
        <fullName evidence="1">Early E2A DNA-binding protein</fullName>
    </alternativeName>
</protein>
<accession>Q65956</accession>
<organismHost>
    <name type="scientific">Canis lupus familiaris</name>
    <name type="common">Dog</name>
    <name type="synonym">Canis familiaris</name>
    <dbReference type="NCBI Taxonomy" id="9615"/>
</organismHost>
<comment type="function">
    <text evidence="1">Plays a role in the elongation phase of viral strand displacement replication by unwinding the template in an ATP-independent fashion, employing its capacity to form multimers. Also enhances the rate of initiation. Released from template upon second strand synthesis. Assembles in complex with viral pTP, viral pol, host NFIA and host POU2F1/OCT1 on viral origin of replication. Covers the whole ssDNA genome during synthesis. The complementary strand synthesis induces its relese from DNA template. May inhibit cellular transcription mediated by the interaction between host SRCAP and CBP.</text>
</comment>
<comment type="subunit">
    <text evidence="1">Homomultimerizes on viral ssDNA bound to pTP. Forms a initiation complex with viral polymerase, pTP and hosts NFIA and POU2F1/OCT1. Interacts with host SRCAP.</text>
</comment>
<comment type="subcellular location">
    <subcellularLocation>
        <location evidence="1">Host nucleus</location>
    </subcellularLocation>
    <text evidence="1">Accumulates in infected cells.</text>
</comment>
<comment type="domain">
    <text evidence="1">The C-terminal arm bridges DBP molecules together, thereby creating a chain.</text>
</comment>
<comment type="similarity">
    <text evidence="1 3">Belongs to the adenoviridae E2A DNA-binding protein family.</text>
</comment>